<reference key="1">
    <citation type="journal article" date="1999" name="Nature">
        <title>Sequence and analysis of chromosome 2 of the plant Arabidopsis thaliana.</title>
        <authorList>
            <person name="Lin X."/>
            <person name="Kaul S."/>
            <person name="Rounsley S.D."/>
            <person name="Shea T.P."/>
            <person name="Benito M.-I."/>
            <person name="Town C.D."/>
            <person name="Fujii C.Y."/>
            <person name="Mason T.M."/>
            <person name="Bowman C.L."/>
            <person name="Barnstead M.E."/>
            <person name="Feldblyum T.V."/>
            <person name="Buell C.R."/>
            <person name="Ketchum K.A."/>
            <person name="Lee J.J."/>
            <person name="Ronning C.M."/>
            <person name="Koo H.L."/>
            <person name="Moffat K.S."/>
            <person name="Cronin L.A."/>
            <person name="Shen M."/>
            <person name="Pai G."/>
            <person name="Van Aken S."/>
            <person name="Umayam L."/>
            <person name="Tallon L.J."/>
            <person name="Gill J.E."/>
            <person name="Adams M.D."/>
            <person name="Carrera A.J."/>
            <person name="Creasy T.H."/>
            <person name="Goodman H.M."/>
            <person name="Somerville C.R."/>
            <person name="Copenhaver G.P."/>
            <person name="Preuss D."/>
            <person name="Nierman W.C."/>
            <person name="White O."/>
            <person name="Eisen J.A."/>
            <person name="Salzberg S.L."/>
            <person name="Fraser C.M."/>
            <person name="Venter J.C."/>
        </authorList>
    </citation>
    <scope>NUCLEOTIDE SEQUENCE [LARGE SCALE GENOMIC DNA]</scope>
    <source>
        <strain>cv. Columbia</strain>
    </source>
</reference>
<reference key="2">
    <citation type="journal article" date="2017" name="Plant J.">
        <title>Araport11: a complete reannotation of the Arabidopsis thaliana reference genome.</title>
        <authorList>
            <person name="Cheng C.Y."/>
            <person name="Krishnakumar V."/>
            <person name="Chan A.P."/>
            <person name="Thibaud-Nissen F."/>
            <person name="Schobel S."/>
            <person name="Town C.D."/>
        </authorList>
    </citation>
    <scope>GENOME REANNOTATION</scope>
    <source>
        <strain>cv. Columbia</strain>
    </source>
</reference>
<reference key="3">
    <citation type="submission" date="2006-07" db="EMBL/GenBank/DDBJ databases">
        <title>Large-scale analysis of RIKEN Arabidopsis full-length (RAFL) cDNAs.</title>
        <authorList>
            <person name="Totoki Y."/>
            <person name="Seki M."/>
            <person name="Ishida J."/>
            <person name="Nakajima M."/>
            <person name="Enju A."/>
            <person name="Kamiya A."/>
            <person name="Narusaka M."/>
            <person name="Shin-i T."/>
            <person name="Nakagawa M."/>
            <person name="Sakamoto N."/>
            <person name="Oishi K."/>
            <person name="Kohara Y."/>
            <person name="Kobayashi M."/>
            <person name="Toyoda A."/>
            <person name="Sakaki Y."/>
            <person name="Sakurai T."/>
            <person name="Iida K."/>
            <person name="Akiyama K."/>
            <person name="Satou M."/>
            <person name="Toyoda T."/>
            <person name="Konagaya A."/>
            <person name="Carninci P."/>
            <person name="Kawai J."/>
            <person name="Hayashizaki Y."/>
            <person name="Shinozaki K."/>
        </authorList>
    </citation>
    <scope>NUCLEOTIDE SEQUENCE [LARGE SCALE MRNA]</scope>
    <source>
        <strain>cv. Columbia</strain>
    </source>
</reference>
<reference key="4">
    <citation type="journal article" date="2009" name="DNA Res.">
        <title>Analysis of multiple occurrences of alternative splicing events in Arabidopsis thaliana using novel sequenced full-length cDNAs.</title>
        <authorList>
            <person name="Iida K."/>
            <person name="Fukami-Kobayashi K."/>
            <person name="Toyoda A."/>
            <person name="Sakaki Y."/>
            <person name="Kobayashi M."/>
            <person name="Seki M."/>
            <person name="Shinozaki K."/>
        </authorList>
    </citation>
    <scope>NUCLEOTIDE SEQUENCE [LARGE SCALE MRNA]</scope>
    <source>
        <strain>cv. Columbia</strain>
        <tissue>Root</tissue>
    </source>
</reference>
<reference key="5">
    <citation type="journal article" date="2007" name="Plant J.">
        <title>The TUMOROUS SHOOT DEVELOPMENT2 gene of Arabidopsis encoding a putative methyltransferase is required for cell adhesion and co-ordinated plant development.</title>
        <authorList>
            <person name="Krupkova E."/>
            <person name="Immerzeel P."/>
            <person name="Pauly M."/>
            <person name="Schmulling T."/>
        </authorList>
    </citation>
    <scope>GENE FAMILY</scope>
</reference>
<proteinExistence type="evidence at transcript level"/>
<evidence type="ECO:0000255" key="1"/>
<evidence type="ECO:0000256" key="2">
    <source>
        <dbReference type="SAM" id="MobiDB-lite"/>
    </source>
</evidence>
<evidence type="ECO:0000305" key="3"/>
<accession>Q0WT31</accession>
<accession>O80779</accession>
<dbReference type="EC" id="2.1.1.-"/>
<dbReference type="EMBL" id="AC004481">
    <property type="protein sequence ID" value="AAC27406.1"/>
    <property type="molecule type" value="Genomic_DNA"/>
</dbReference>
<dbReference type="EMBL" id="CP002685">
    <property type="protein sequence ID" value="AEC08950.1"/>
    <property type="molecule type" value="Genomic_DNA"/>
</dbReference>
<dbReference type="EMBL" id="CP002685">
    <property type="protein sequence ID" value="AEC08951.1"/>
    <property type="molecule type" value="Genomic_DNA"/>
</dbReference>
<dbReference type="EMBL" id="CP002685">
    <property type="protein sequence ID" value="ANM62567.1"/>
    <property type="molecule type" value="Genomic_DNA"/>
</dbReference>
<dbReference type="EMBL" id="AK227732">
    <property type="protein sequence ID" value="BAE99717.1"/>
    <property type="molecule type" value="mRNA"/>
</dbReference>
<dbReference type="EMBL" id="AK317495">
    <property type="protein sequence ID" value="BAH20160.1"/>
    <property type="molecule type" value="mRNA"/>
</dbReference>
<dbReference type="PIR" id="T02318">
    <property type="entry name" value="T02318"/>
</dbReference>
<dbReference type="RefSeq" id="NP_001031477.1">
    <property type="nucleotide sequence ID" value="NM_001036400.2"/>
</dbReference>
<dbReference type="RefSeq" id="NP_001324716.1">
    <property type="nucleotide sequence ID" value="NM_001336501.1"/>
</dbReference>
<dbReference type="RefSeq" id="NP_180977.1">
    <property type="nucleotide sequence ID" value="NM_128981.4"/>
</dbReference>
<dbReference type="FunCoup" id="Q0WT31">
    <property type="interactions" value="105"/>
</dbReference>
<dbReference type="STRING" id="3702.Q0WT31"/>
<dbReference type="GlyGen" id="Q0WT31">
    <property type="glycosylation" value="6 sites"/>
</dbReference>
<dbReference type="PaxDb" id="3702-AT2G34300.1"/>
<dbReference type="ProteomicsDB" id="234887"/>
<dbReference type="EnsemblPlants" id="AT2G34300.1">
    <property type="protein sequence ID" value="AT2G34300.1"/>
    <property type="gene ID" value="AT2G34300"/>
</dbReference>
<dbReference type="EnsemblPlants" id="AT2G34300.2">
    <property type="protein sequence ID" value="AT2G34300.2"/>
    <property type="gene ID" value="AT2G34300"/>
</dbReference>
<dbReference type="EnsemblPlants" id="AT2G34300.3">
    <property type="protein sequence ID" value="AT2G34300.3"/>
    <property type="gene ID" value="AT2G34300"/>
</dbReference>
<dbReference type="GeneID" id="817991"/>
<dbReference type="Gramene" id="AT2G34300.1">
    <property type="protein sequence ID" value="AT2G34300.1"/>
    <property type="gene ID" value="AT2G34300"/>
</dbReference>
<dbReference type="Gramene" id="AT2G34300.2">
    <property type="protein sequence ID" value="AT2G34300.2"/>
    <property type="gene ID" value="AT2G34300"/>
</dbReference>
<dbReference type="Gramene" id="AT2G34300.3">
    <property type="protein sequence ID" value="AT2G34300.3"/>
    <property type="gene ID" value="AT2G34300"/>
</dbReference>
<dbReference type="KEGG" id="ath:AT2G34300"/>
<dbReference type="Araport" id="AT2G34300"/>
<dbReference type="TAIR" id="AT2G34300"/>
<dbReference type="eggNOG" id="ENOG502QTUG">
    <property type="taxonomic scope" value="Eukaryota"/>
</dbReference>
<dbReference type="HOGENOM" id="CLU_010485_1_2_1"/>
<dbReference type="InParanoid" id="Q0WT31"/>
<dbReference type="OMA" id="VEKTMWR"/>
<dbReference type="OrthoDB" id="2013972at2759"/>
<dbReference type="PhylomeDB" id="Q0WT31"/>
<dbReference type="CD-CODE" id="4299E36E">
    <property type="entry name" value="Nucleolus"/>
</dbReference>
<dbReference type="PRO" id="PR:Q0WT31"/>
<dbReference type="Proteomes" id="UP000006548">
    <property type="component" value="Chromosome 2"/>
</dbReference>
<dbReference type="ExpressionAtlas" id="Q0WT31">
    <property type="expression patterns" value="baseline and differential"/>
</dbReference>
<dbReference type="GO" id="GO:0005783">
    <property type="term" value="C:endoplasmic reticulum"/>
    <property type="evidence" value="ECO:0007005"/>
    <property type="project" value="TAIR"/>
</dbReference>
<dbReference type="GO" id="GO:0005768">
    <property type="term" value="C:endosome"/>
    <property type="evidence" value="ECO:0007005"/>
    <property type="project" value="TAIR"/>
</dbReference>
<dbReference type="GO" id="GO:0005794">
    <property type="term" value="C:Golgi apparatus"/>
    <property type="evidence" value="ECO:0007005"/>
    <property type="project" value="TAIR"/>
</dbReference>
<dbReference type="GO" id="GO:0005797">
    <property type="term" value="C:Golgi medial cisterna"/>
    <property type="evidence" value="ECO:0007005"/>
    <property type="project" value="TAIR"/>
</dbReference>
<dbReference type="GO" id="GO:0000139">
    <property type="term" value="C:Golgi membrane"/>
    <property type="evidence" value="ECO:0007669"/>
    <property type="project" value="UniProtKB-SubCell"/>
</dbReference>
<dbReference type="GO" id="GO:0009506">
    <property type="term" value="C:plasmodesma"/>
    <property type="evidence" value="ECO:0007005"/>
    <property type="project" value="TAIR"/>
</dbReference>
<dbReference type="GO" id="GO:0005802">
    <property type="term" value="C:trans-Golgi network"/>
    <property type="evidence" value="ECO:0007005"/>
    <property type="project" value="TAIR"/>
</dbReference>
<dbReference type="GO" id="GO:0008168">
    <property type="term" value="F:methyltransferase activity"/>
    <property type="evidence" value="ECO:0007669"/>
    <property type="project" value="UniProtKB-KW"/>
</dbReference>
<dbReference type="GO" id="GO:0032259">
    <property type="term" value="P:methylation"/>
    <property type="evidence" value="ECO:0007669"/>
    <property type="project" value="UniProtKB-KW"/>
</dbReference>
<dbReference type="FunFam" id="3.40.50.150:FF:000084">
    <property type="entry name" value="probable methyltransferase PMT23"/>
    <property type="match status" value="1"/>
</dbReference>
<dbReference type="Gene3D" id="3.40.50.150">
    <property type="entry name" value="Vaccinia Virus protein VP39"/>
    <property type="match status" value="1"/>
</dbReference>
<dbReference type="InterPro" id="IPR004159">
    <property type="entry name" value="Put_SAM_MeTrfase"/>
</dbReference>
<dbReference type="InterPro" id="IPR029063">
    <property type="entry name" value="SAM-dependent_MTases_sf"/>
</dbReference>
<dbReference type="PANTHER" id="PTHR10108:SF1167">
    <property type="entry name" value="METHYLTRANSFERASE PMT25-RELATED"/>
    <property type="match status" value="1"/>
</dbReference>
<dbReference type="PANTHER" id="PTHR10108">
    <property type="entry name" value="SAM-DEPENDENT METHYLTRANSFERASE"/>
    <property type="match status" value="1"/>
</dbReference>
<dbReference type="Pfam" id="PF03141">
    <property type="entry name" value="Methyltransf_29"/>
    <property type="match status" value="1"/>
</dbReference>
<dbReference type="SUPFAM" id="SSF53335">
    <property type="entry name" value="S-adenosyl-L-methionine-dependent methyltransferases"/>
    <property type="match status" value="2"/>
</dbReference>
<organism>
    <name type="scientific">Arabidopsis thaliana</name>
    <name type="common">Mouse-ear cress</name>
    <dbReference type="NCBI Taxonomy" id="3702"/>
    <lineage>
        <taxon>Eukaryota</taxon>
        <taxon>Viridiplantae</taxon>
        <taxon>Streptophyta</taxon>
        <taxon>Embryophyta</taxon>
        <taxon>Tracheophyta</taxon>
        <taxon>Spermatophyta</taxon>
        <taxon>Magnoliopsida</taxon>
        <taxon>eudicotyledons</taxon>
        <taxon>Gunneridae</taxon>
        <taxon>Pentapetalae</taxon>
        <taxon>rosids</taxon>
        <taxon>malvids</taxon>
        <taxon>Brassicales</taxon>
        <taxon>Brassicaceae</taxon>
        <taxon>Camelineae</taxon>
        <taxon>Arabidopsis</taxon>
    </lineage>
</organism>
<comment type="subcellular location">
    <subcellularLocation>
        <location evidence="3">Golgi apparatus membrane</location>
        <topology evidence="3">Single-pass type II membrane protein</topology>
    </subcellularLocation>
</comment>
<comment type="similarity">
    <text evidence="3">Belongs to the methyltransferase superfamily.</text>
</comment>
<sequence>MAMGKYSRVDGKKSSSYGLTITIVLLLSLCLVGTWMFMSSWSAPADSAGYSSTDTAKDVSKNDLRKEEGDRDPKNFSDEKNEENEAATENNQVKTDSENSAEGNQVNESSGEKTEAGEERKESDDNNGDGDGEKEKNVKEVGSESDETTQKEKTQLEESTEENKSEDGNGNEEKAEENASETEESTEKSSKEVFPAGDQAEITKESSTGDGAWSTQLVESQNEKKAQQSSISKDQSSYGWKTCNVTAGPDYIPCLDNWQAIKKLHTTMHYEHRERHCPEESPHCLVSLPDGYKRSIKWPKSREKIWYNNVPHTKLAEIKGHQNWVKMSGEHLTFPGGGTQFKNGALHYIDFIQQSHPAIAWGNRTRVILDVGCGVASFGGYLFERDVLALSFAPKDEHEAQVQFALERGIPAMLNVMGTKRLPFPGSVFDLIHCARCRVPWHIEGGKLLLELNRALRPGGFFVWSATPVYRKNEEDSGIWKAMSELTKAMCWKLVTIKKDKLNEVGAAIYQKPTSNKCYNKRPQNEPPLCKDSDDQNAAWNVPLEACMHKVTEDSSKRGAVWPNMWPERVETAPEWLDSQEGVYGKPAPEDFTADQEKWKTIVSKAYLNDMGIDWSNVRNVMDMRAVYGGFAAALKDLKLWVMNVVPVDAPDTLPIIYERGLFGIYHDWCESFNTYPRTYDLLHADHLFSTLRKRCNLVSVMAEIDRILRPQGTFIIRDDMETLGEVEKMVKSMKWKVKMTQSKDNEGLLSIEKSWWRPEETETIKSAIA</sequence>
<name>PMTP_ARATH</name>
<protein>
    <recommendedName>
        <fullName>Probable methyltransferase PMT25</fullName>
        <ecNumber>2.1.1.-</ecNumber>
    </recommendedName>
</protein>
<gene>
    <name type="ordered locus">At2g34300</name>
    <name type="ORF">F13P17.14</name>
</gene>
<feature type="chain" id="PRO_0000393265" description="Probable methyltransferase PMT25">
    <location>
        <begin position="1"/>
        <end position="770"/>
    </location>
</feature>
<feature type="topological domain" description="Cytoplasmic" evidence="1">
    <location>
        <begin position="1"/>
        <end position="17"/>
    </location>
</feature>
<feature type="transmembrane region" description="Helical; Signal-anchor for type II membrane protein" evidence="1">
    <location>
        <begin position="18"/>
        <end position="38"/>
    </location>
</feature>
<feature type="topological domain" description="Lumenal" evidence="1">
    <location>
        <begin position="39"/>
        <end position="770"/>
    </location>
</feature>
<feature type="region of interest" description="Disordered" evidence="2">
    <location>
        <begin position="44"/>
        <end position="238"/>
    </location>
</feature>
<feature type="compositionally biased region" description="Basic and acidic residues" evidence="2">
    <location>
        <begin position="55"/>
        <end position="79"/>
    </location>
</feature>
<feature type="compositionally biased region" description="Polar residues" evidence="2">
    <location>
        <begin position="92"/>
        <end position="109"/>
    </location>
</feature>
<feature type="compositionally biased region" description="Basic and acidic residues" evidence="2">
    <location>
        <begin position="110"/>
        <end position="124"/>
    </location>
</feature>
<feature type="compositionally biased region" description="Basic and acidic residues" evidence="2">
    <location>
        <begin position="131"/>
        <end position="177"/>
    </location>
</feature>
<feature type="compositionally biased region" description="Polar residues" evidence="2">
    <location>
        <begin position="205"/>
        <end position="220"/>
    </location>
</feature>
<feature type="compositionally biased region" description="Polar residues" evidence="2">
    <location>
        <begin position="227"/>
        <end position="238"/>
    </location>
</feature>
<feature type="glycosylation site" description="N-linked (GlcNAc...) asparagine" evidence="1">
    <location>
        <position position="75"/>
    </location>
</feature>
<feature type="glycosylation site" description="N-linked (GlcNAc...) asparagine" evidence="1">
    <location>
        <position position="107"/>
    </location>
</feature>
<feature type="glycosylation site" description="N-linked (GlcNAc...) asparagine" evidence="1">
    <location>
        <position position="163"/>
    </location>
</feature>
<feature type="glycosylation site" description="N-linked (GlcNAc...) asparagine" evidence="1">
    <location>
        <position position="178"/>
    </location>
</feature>
<feature type="glycosylation site" description="N-linked (GlcNAc...) asparagine" evidence="1">
    <location>
        <position position="244"/>
    </location>
</feature>
<feature type="glycosylation site" description="N-linked (GlcNAc...) asparagine" evidence="1">
    <location>
        <position position="363"/>
    </location>
</feature>
<feature type="sequence conflict" description="In Ref. 3; BAE99717 and 4; BAH20160." evidence="3" ref="3 4">
    <original>S</original>
    <variation>G</variation>
    <location>
        <position position="328"/>
    </location>
</feature>
<keyword id="KW-0325">Glycoprotein</keyword>
<keyword id="KW-0333">Golgi apparatus</keyword>
<keyword id="KW-0472">Membrane</keyword>
<keyword id="KW-0489">Methyltransferase</keyword>
<keyword id="KW-1185">Reference proteome</keyword>
<keyword id="KW-0735">Signal-anchor</keyword>
<keyword id="KW-0808">Transferase</keyword>
<keyword id="KW-0812">Transmembrane</keyword>
<keyword id="KW-1133">Transmembrane helix</keyword>